<evidence type="ECO:0000250" key="1">
    <source>
        <dbReference type="UniProtKB" id="P25061"/>
    </source>
</evidence>
<evidence type="ECO:0000250" key="2">
    <source>
        <dbReference type="UniProtKB" id="P41851"/>
    </source>
</evidence>
<evidence type="ECO:0000250" key="3">
    <source>
        <dbReference type="UniProtKB" id="Q00514"/>
    </source>
</evidence>
<evidence type="ECO:0000255" key="4"/>
<evidence type="ECO:0000269" key="5">
    <source>
    </source>
</evidence>
<evidence type="ECO:0000305" key="6"/>
<keyword id="KW-0997">Cell inner membrane</keyword>
<keyword id="KW-1003">Cell membrane</keyword>
<keyword id="KW-0472">Membrane</keyword>
<keyword id="KW-0653">Protein transport</keyword>
<keyword id="KW-1185">Reference proteome</keyword>
<keyword id="KW-0812">Transmembrane</keyword>
<keyword id="KW-1133">Transmembrane helix</keyword>
<keyword id="KW-0813">Transport</keyword>
<gene>
    <name type="primary">gspM</name>
    <name type="synonym">hopZ</name>
    <name type="synonym">pshM</name>
    <name type="ordered locus">b3334</name>
    <name type="ordered locus">JW5704</name>
</gene>
<feature type="chain" id="PRO_0000207323" description="Putative type II secretion system protein M">
    <location>
        <begin position="1"/>
        <end position="153"/>
    </location>
</feature>
<feature type="topological domain" description="Cytoplasmic" evidence="1">
    <location>
        <begin position="1"/>
        <end position="16"/>
    </location>
</feature>
<feature type="transmembrane region" description="Helical" evidence="4">
    <location>
        <begin position="17"/>
        <end position="37"/>
    </location>
</feature>
<feature type="topological domain" description="Periplasmic" evidence="1">
    <location>
        <begin position="38"/>
        <end position="153"/>
    </location>
</feature>
<dbReference type="EMBL" id="L28106">
    <property type="protein sequence ID" value="AAC36927.1"/>
    <property type="status" value="ALT_INIT"/>
    <property type="molecule type" value="Genomic_DNA"/>
</dbReference>
<dbReference type="EMBL" id="U18997">
    <property type="protein sequence ID" value="AAA58131.1"/>
    <property type="status" value="ALT_INIT"/>
    <property type="molecule type" value="Genomic_DNA"/>
</dbReference>
<dbReference type="EMBL" id="U00096">
    <property type="protein sequence ID" value="AAC76359.2"/>
    <property type="molecule type" value="Genomic_DNA"/>
</dbReference>
<dbReference type="EMBL" id="AP009048">
    <property type="protein sequence ID" value="BAE77957.1"/>
    <property type="molecule type" value="Genomic_DNA"/>
</dbReference>
<dbReference type="PIR" id="A65127">
    <property type="entry name" value="A65127"/>
</dbReference>
<dbReference type="RefSeq" id="NP_417793.2">
    <property type="nucleotide sequence ID" value="NC_000913.3"/>
</dbReference>
<dbReference type="RefSeq" id="WP_001295161.1">
    <property type="nucleotide sequence ID" value="NZ_STEB01000038.1"/>
</dbReference>
<dbReference type="SMR" id="P36678"/>
<dbReference type="BioGRID" id="4262464">
    <property type="interactions" value="145"/>
</dbReference>
<dbReference type="FunCoup" id="P36678">
    <property type="interactions" value="80"/>
</dbReference>
<dbReference type="STRING" id="511145.b3334"/>
<dbReference type="PaxDb" id="511145-b3334"/>
<dbReference type="EnsemblBacteria" id="AAC76359">
    <property type="protein sequence ID" value="AAC76359"/>
    <property type="gene ID" value="b3334"/>
</dbReference>
<dbReference type="GeneID" id="947841"/>
<dbReference type="KEGG" id="ecj:JW5704"/>
<dbReference type="KEGG" id="eco:b3334"/>
<dbReference type="KEGG" id="ecoc:C3026_18110"/>
<dbReference type="PATRIC" id="fig|1411691.4.peg.3397"/>
<dbReference type="EchoBASE" id="EB2091"/>
<dbReference type="eggNOG" id="COG3149">
    <property type="taxonomic scope" value="Bacteria"/>
</dbReference>
<dbReference type="eggNOG" id="ENOG502ZF85">
    <property type="taxonomic scope" value="Bacteria"/>
</dbReference>
<dbReference type="HOGENOM" id="CLU_1710496_0_0_6"/>
<dbReference type="InParanoid" id="P36678"/>
<dbReference type="OMA" id="KCHERCN"/>
<dbReference type="OrthoDB" id="6625928at2"/>
<dbReference type="BioCyc" id="EcoCyc:EG12173-MONOMER"/>
<dbReference type="BioCyc" id="MetaCyc:EG12173-MONOMER"/>
<dbReference type="PRO" id="PR:P36678"/>
<dbReference type="Proteomes" id="UP000000625">
    <property type="component" value="Chromosome"/>
</dbReference>
<dbReference type="GO" id="GO:0005886">
    <property type="term" value="C:plasma membrane"/>
    <property type="evidence" value="ECO:0007669"/>
    <property type="project" value="UniProtKB-SubCell"/>
</dbReference>
<dbReference type="GO" id="GO:0015627">
    <property type="term" value="C:type II protein secretion system complex"/>
    <property type="evidence" value="ECO:0007669"/>
    <property type="project" value="InterPro"/>
</dbReference>
<dbReference type="GO" id="GO:0015628">
    <property type="term" value="P:protein secretion by the type II secretion system"/>
    <property type="evidence" value="ECO:0007669"/>
    <property type="project" value="InterPro"/>
</dbReference>
<dbReference type="InterPro" id="IPR007690">
    <property type="entry name" value="T2SS_GspM"/>
</dbReference>
<dbReference type="InterPro" id="IPR023229">
    <property type="entry name" value="T2SS_M_periplasmic_sf"/>
</dbReference>
<dbReference type="Pfam" id="PF04612">
    <property type="entry name" value="T2SSM"/>
    <property type="match status" value="1"/>
</dbReference>
<dbReference type="SUPFAM" id="SSF103054">
    <property type="entry name" value="General secretion pathway protein M, EpsM"/>
    <property type="match status" value="1"/>
</dbReference>
<organism>
    <name type="scientific">Escherichia coli (strain K12)</name>
    <dbReference type="NCBI Taxonomy" id="83333"/>
    <lineage>
        <taxon>Bacteria</taxon>
        <taxon>Pseudomonadati</taxon>
        <taxon>Pseudomonadota</taxon>
        <taxon>Gammaproteobacteria</taxon>
        <taxon>Enterobacterales</taxon>
        <taxon>Enterobacteriaceae</taxon>
        <taxon>Escherichia</taxon>
    </lineage>
</organism>
<comment type="function">
    <text evidence="1">Inner membrane component of the type II secretion system required for the energy-dependent secretion of extracellular factors such as proteases and toxins from the periplasm. Plays a role in the complex assembly and recruits GspL resulting in a stable complex in the inner membrane. Provides thus a link between the energy-providing GspE protein in the cytoplasm and the rest of the T2SS machinery.</text>
</comment>
<comment type="subunit">
    <text evidence="1 2 3">Type II secretion system is composed of four main components: the outer membrane complex, the inner membrane complex, the cytoplasmic secretion ATPase and the periplasm-spanning pseudopilus (By similarity). Forms homodimers (By similarity). Interacts with GspL. Interacts with GspE and GspF (By similarity).</text>
</comment>
<comment type="subcellular location">
    <subcellularLocation>
        <location evidence="1">Cell inner membrane</location>
        <topology evidence="1">Single-pass membrane protein</topology>
    </subcellularLocation>
</comment>
<comment type="induction">
    <text evidence="5">Silenced by the DNA-binding protein H-NS under standard growth conditions.</text>
</comment>
<comment type="miscellaneous">
    <text>Part of a cryptic operon that encodes proteins involved in type II secretion machinery in other organisms, but is not expressed in strain K12.</text>
</comment>
<comment type="similarity">
    <text evidence="6">Belongs to the GSP M family.</text>
</comment>
<comment type="sequence caution" evidence="6">
    <conflict type="erroneous initiation">
        <sequence resource="EMBL-CDS" id="AAA58131"/>
    </conflict>
    <text>Extended N-terminus.</text>
</comment>
<comment type="sequence caution" evidence="6">
    <conflict type="erroneous initiation">
        <sequence resource="EMBL-CDS" id="AAC36927"/>
    </conflict>
    <text>Extended N-terminus.</text>
</comment>
<accession>P36678</accession>
<accession>Q2M6Z9</accession>
<protein>
    <recommendedName>
        <fullName>Putative type II secretion system protein M</fullName>
        <shortName>T2SS protein M</shortName>
    </recommendedName>
    <alternativeName>
        <fullName>Putative general secretion pathway protein M</fullName>
    </alternativeName>
    <alternativeName>
        <fullName>Transport protein PshM</fullName>
    </alternativeName>
</protein>
<reference key="1">
    <citation type="journal article" date="1994" name="Gene">
        <title>Escherichia coli contains a set of genes homologous to those involved in protein secretion, DNA uptake and the assembly of type-4 fimbriae in other bacteria.</title>
        <authorList>
            <person name="Whitchurch C.B."/>
            <person name="Mattick J.S."/>
        </authorList>
    </citation>
    <scope>NUCLEOTIDE SEQUENCE [GENOMIC DNA]</scope>
    <source>
        <strain>K12</strain>
    </source>
</reference>
<reference key="2">
    <citation type="journal article" date="1997" name="Science">
        <title>The complete genome sequence of Escherichia coli K-12.</title>
        <authorList>
            <person name="Blattner F.R."/>
            <person name="Plunkett G. III"/>
            <person name="Bloch C.A."/>
            <person name="Perna N.T."/>
            <person name="Burland V."/>
            <person name="Riley M."/>
            <person name="Collado-Vides J."/>
            <person name="Glasner J.D."/>
            <person name="Rode C.K."/>
            <person name="Mayhew G.F."/>
            <person name="Gregor J."/>
            <person name="Davis N.W."/>
            <person name="Kirkpatrick H.A."/>
            <person name="Goeden M.A."/>
            <person name="Rose D.J."/>
            <person name="Mau B."/>
            <person name="Shao Y."/>
        </authorList>
    </citation>
    <scope>NUCLEOTIDE SEQUENCE [LARGE SCALE GENOMIC DNA]</scope>
    <source>
        <strain>K12 / MG1655 / ATCC 47076</strain>
    </source>
</reference>
<reference key="3">
    <citation type="journal article" date="2006" name="Mol. Syst. Biol.">
        <title>Highly accurate genome sequences of Escherichia coli K-12 strains MG1655 and W3110.</title>
        <authorList>
            <person name="Hayashi K."/>
            <person name="Morooka N."/>
            <person name="Yamamoto Y."/>
            <person name="Fujita K."/>
            <person name="Isono K."/>
            <person name="Choi S."/>
            <person name="Ohtsubo E."/>
            <person name="Baba T."/>
            <person name="Wanner B.L."/>
            <person name="Mori H."/>
            <person name="Horiuchi T."/>
        </authorList>
    </citation>
    <scope>NUCLEOTIDE SEQUENCE [LARGE SCALE GENOMIC DNA]</scope>
    <source>
        <strain>K12 / W3110 / ATCC 27325 / DSM 5911</strain>
    </source>
</reference>
<reference key="4">
    <citation type="journal article" date="1996" name="J. Bacteriol.">
        <title>The cryptic general secretory pathway (gsp) operon of Escherichia coli K-12 encodes functional proteins.</title>
        <authorList>
            <person name="Francetic O."/>
            <person name="Pugsley A.P."/>
        </authorList>
    </citation>
    <scope>LACK OF EXPRESSION</scope>
    <source>
        <strain>K12 / MC4100 / ATCC 35695 / DSM 6574</strain>
    </source>
</reference>
<reference key="5">
    <citation type="journal article" date="2000" name="EMBO J.">
        <title>Expression of the endogenous type II secretion pathway in Escherichia coli leads to chitinase secretion.</title>
        <authorList>
            <person name="Francetic O."/>
            <person name="Belin D."/>
            <person name="Badaut C."/>
            <person name="Pugsley A.P."/>
        </authorList>
    </citation>
    <scope>LACK OF EXPRESSION</scope>
    <scope>TRANSCRIPTIONAL REGULATION</scope>
    <source>
        <strain>K12 / MC4100 / ATCC 35695 / DSM 6574</strain>
    </source>
</reference>
<proteinExistence type="evidence at transcript level"/>
<sequence length="153" mass="17234">MIKSWWAEKSTSEKQIVAALAVLSLGVFCWLGVIKPIDTYIAEHQSHAQKIKKDIKWMQDQASTHGLLGHPALTQPIKNILLEEAKRENLAITLENGPDNTLTIHPVTAPLENVSRWLTTAQVTYGIVIEDLQFTLAGNEEITLRHLSFREQQ</sequence>
<name>GSPM_ECOLI</name>